<accession>P20589</accession>
<gene>
    <name type="primary">haeIIIM</name>
</gene>
<sequence length="330" mass="37686">MNLISLFSGAGGLDLGFQKAGFRIICANEYDKSIWKTYESNHSAKLIKGDISKISSDEFPKCDGIIGGPPCQSWSEGGSLRGIDDPRGKLFYEYIRILKQKKPIFFLAENVKGMMAQRHNKAVQEFIQEFDNAGYDVHIILLNANDYGVAQDRKRVFYIGFRKELNINYLPPIPHLIKPTFKDVIWDLKDNPIPALDKNKTNGNKCIYPNHEYFIGSYSTIFMSRNRVRQWNEPAFTVQASGRQCQLHPQAPVMLKVSKNLNKFVEGKEHLYRRLTVRECARVQGFPDDFIFHYESLNDGYKMIGNAVPVNLAYEIAKTIKSALEICKGN</sequence>
<reference key="1">
    <citation type="journal article" date="1988" name="Gene">
        <title>Cloning and analysis of the HaeIII and HaeII methyltransferase genes.</title>
        <authorList>
            <person name="Slatko B.E."/>
            <person name="Croft R."/>
            <person name="Moran L.S."/>
            <person name="Wilson G.G."/>
        </authorList>
    </citation>
    <scope>NUCLEOTIDE SEQUENCE [GENOMIC DNA]</scope>
    <source>
        <strain>ATCC 11116 / CCUG 25716 / NCTC 8502 / 180-a</strain>
    </source>
</reference>
<reference key="2">
    <citation type="submission" date="1998-02" db="EMBL/GenBank/DDBJ databases">
        <authorList>
            <person name="Zhang B.-H."/>
            <person name="Wilson G.G."/>
        </authorList>
    </citation>
    <scope>NUCLEOTIDE SEQUENCE [GENOMIC DNA]</scope>
    <source>
        <strain>ATCC 11116 / CCUG 25716 / NCTC 8502 / 180-a</strain>
    </source>
</reference>
<reference key="3">
    <citation type="journal article" date="1991" name="Biochemistry">
        <title>Direct identification of the active-site nucleophile in a DNA (cytosine-5)-methyltransferase.</title>
        <authorList>
            <person name="Chen L."/>
            <person name="McMillan A.M."/>
            <person name="Chang W."/>
            <person name="Ezak-Nipkay K."/>
            <person name="Lane W.S."/>
            <person name="Verdine G.L."/>
        </authorList>
    </citation>
    <scope>PROTEIN SEQUENCE OF 62-81</scope>
    <scope>FUNCTION</scope>
    <scope>CATALYTIC ACTIVITY</scope>
    <scope>ACTIVE SITE</scope>
    <scope>DNA-BINDING</scope>
</reference>
<reference key="4">
    <citation type="journal article" date="2003" name="Nucleic Acids Res.">
        <title>A nomenclature for restriction enzymes, DNA methyltransferases, homing endonucleases and their genes.</title>
        <authorList>
            <person name="Roberts R.J."/>
            <person name="Belfort M."/>
            <person name="Bestor T."/>
            <person name="Bhagwat A.S."/>
            <person name="Bickle T.A."/>
            <person name="Bitinaite J."/>
            <person name="Blumenthal R.M."/>
            <person name="Degtyarev S.K."/>
            <person name="Dryden D.T."/>
            <person name="Dybvig K."/>
            <person name="Firman K."/>
            <person name="Gromova E.S."/>
            <person name="Gumport R.I."/>
            <person name="Halford S.E."/>
            <person name="Hattman S."/>
            <person name="Heitman J."/>
            <person name="Hornby D.P."/>
            <person name="Janulaitis A."/>
            <person name="Jeltsch A."/>
            <person name="Josephsen J."/>
            <person name="Kiss A."/>
            <person name="Klaenhammer T.R."/>
            <person name="Kobayashi I."/>
            <person name="Kong H."/>
            <person name="Krueger D.H."/>
            <person name="Lacks S."/>
            <person name="Marinus M.G."/>
            <person name="Miyahara M."/>
            <person name="Morgan R.D."/>
            <person name="Murray N.E."/>
            <person name="Nagaraja V."/>
            <person name="Piekarowicz A."/>
            <person name="Pingoud A."/>
            <person name="Raleigh E."/>
            <person name="Rao D.N."/>
            <person name="Reich N."/>
            <person name="Repin V.E."/>
            <person name="Selker E.U."/>
            <person name="Shaw P.C."/>
            <person name="Stein D.C."/>
            <person name="Stoddard B.L."/>
            <person name="Szybalski W."/>
            <person name="Trautner T.A."/>
            <person name="Van Etten J.L."/>
            <person name="Vitor J.M."/>
            <person name="Wilson G.G."/>
            <person name="Xu S.Y."/>
        </authorList>
    </citation>
    <scope>NOMENCLATURE</scope>
</reference>
<reference evidence="8" key="5">
    <citation type="journal article" date="1995" name="Cell">
        <title>The crystal structure of HaeIII methyltransferase covalently complexed to DNA: an extrahelical cytosine and rearranged base pairing.</title>
        <authorList>
            <person name="Reinisch K.M."/>
            <person name="Chen L."/>
            <person name="Verdine G.L."/>
            <person name="Lipscomb W.N."/>
        </authorList>
    </citation>
    <scope>X-RAY CRYSTALLOGRAPHY (2.8 ANGSTROMS) IN COMPLEX WITH DNA</scope>
    <scope>SUBUNIT</scope>
</reference>
<reference evidence="9" key="6">
    <citation type="journal article" date="2012" name="J. Biol. Chem.">
        <title>Structural origins of DNA target selection and nucleobase extrusion by a DNA cytosine methyltransferase.</title>
        <authorList>
            <person name="Didovyk A."/>
            <person name="Verdine G.L."/>
        </authorList>
    </citation>
    <scope>X-RAY CRYSTALLOGRAPHY (2.50 ANGSTROMS) OF MUTANT SER-71 IN COMPLEX WITH ATP</scope>
    <scope>SUBUNIT</scope>
    <scope>MUTAGENESIS OF CYS-71</scope>
</reference>
<proteinExistence type="evidence at protein level"/>
<evidence type="ECO:0000255" key="1">
    <source>
        <dbReference type="PROSITE-ProRule" id="PRU01016"/>
    </source>
</evidence>
<evidence type="ECO:0000255" key="2">
    <source>
        <dbReference type="PROSITE-ProRule" id="PRU10018"/>
    </source>
</evidence>
<evidence type="ECO:0000269" key="3">
    <source>
    </source>
</evidence>
<evidence type="ECO:0000269" key="4">
    <source>
    </source>
</evidence>
<evidence type="ECO:0000269" key="5">
    <source>
    </source>
</evidence>
<evidence type="ECO:0000303" key="6">
    <source>
    </source>
</evidence>
<evidence type="ECO:0000303" key="7">
    <source>
    </source>
</evidence>
<evidence type="ECO:0007744" key="8">
    <source>
        <dbReference type="PDB" id="1DCT"/>
    </source>
</evidence>
<evidence type="ECO:0007744" key="9">
    <source>
        <dbReference type="PDB" id="3UBT"/>
    </source>
</evidence>
<evidence type="ECO:0007829" key="10">
    <source>
        <dbReference type="PDB" id="1DCT"/>
    </source>
</evidence>
<evidence type="ECO:0007829" key="11">
    <source>
        <dbReference type="PDB" id="3UBT"/>
    </source>
</evidence>
<name>MTH3_HAEAE</name>
<organism>
    <name type="scientific">Haemophilus aegyptius</name>
    <dbReference type="NCBI Taxonomy" id="197575"/>
    <lineage>
        <taxon>Bacteria</taxon>
        <taxon>Pseudomonadati</taxon>
        <taxon>Pseudomonadota</taxon>
        <taxon>Gammaproteobacteria</taxon>
        <taxon>Pasteurellales</taxon>
        <taxon>Pasteurellaceae</taxon>
        <taxon>Haemophilus</taxon>
    </lineage>
</organism>
<keyword id="KW-0002">3D-structure</keyword>
<keyword id="KW-0067">ATP-binding</keyword>
<keyword id="KW-0903">Direct protein sequencing</keyword>
<keyword id="KW-0238">DNA-binding</keyword>
<keyword id="KW-0489">Methyltransferase</keyword>
<keyword id="KW-0547">Nucleotide-binding</keyword>
<keyword id="KW-0680">Restriction system</keyword>
<keyword id="KW-0949">S-adenosyl-L-methionine</keyword>
<keyword id="KW-0808">Transferase</keyword>
<dbReference type="EC" id="2.1.1.37" evidence="3"/>
<dbReference type="EMBL" id="M24625">
    <property type="protein sequence ID" value="AAA24970.1"/>
    <property type="molecule type" value="Genomic_DNA"/>
</dbReference>
<dbReference type="EMBL" id="AF051375">
    <property type="protein sequence ID" value="AAC05696.1"/>
    <property type="molecule type" value="Genomic_DNA"/>
</dbReference>
<dbReference type="PIR" id="JS0102">
    <property type="entry name" value="JS0102"/>
</dbReference>
<dbReference type="RefSeq" id="WP_013527695.1">
    <property type="nucleotide sequence ID" value="NZ_CP082857.1"/>
</dbReference>
<dbReference type="PDB" id="1DCT">
    <property type="method" value="X-ray"/>
    <property type="resolution" value="2.80 A"/>
    <property type="chains" value="A/B=1-324"/>
</dbReference>
<dbReference type="PDB" id="3UBT">
    <property type="method" value="X-ray"/>
    <property type="resolution" value="2.50 A"/>
    <property type="chains" value="A/B/Y=1-330"/>
</dbReference>
<dbReference type="PDBsum" id="1DCT"/>
<dbReference type="PDBsum" id="3UBT"/>
<dbReference type="SMR" id="P20589"/>
<dbReference type="REBASE" id="3410">
    <property type="entry name" value="M.HaeIII"/>
</dbReference>
<dbReference type="BRENDA" id="2.1.1.37">
    <property type="organism ID" value="2525"/>
</dbReference>
<dbReference type="EvolutionaryTrace" id="P20589"/>
<dbReference type="PRO" id="PR:P20589"/>
<dbReference type="GO" id="GO:0005524">
    <property type="term" value="F:ATP binding"/>
    <property type="evidence" value="ECO:0007669"/>
    <property type="project" value="UniProtKB-KW"/>
</dbReference>
<dbReference type="GO" id="GO:0003886">
    <property type="term" value="F:DNA (cytosine-5-)-methyltransferase activity"/>
    <property type="evidence" value="ECO:0007669"/>
    <property type="project" value="UniProtKB-EC"/>
</dbReference>
<dbReference type="GO" id="GO:0003677">
    <property type="term" value="F:DNA binding"/>
    <property type="evidence" value="ECO:0007669"/>
    <property type="project" value="UniProtKB-KW"/>
</dbReference>
<dbReference type="GO" id="GO:0009307">
    <property type="term" value="P:DNA restriction-modification system"/>
    <property type="evidence" value="ECO:0007669"/>
    <property type="project" value="UniProtKB-KW"/>
</dbReference>
<dbReference type="GO" id="GO:0032259">
    <property type="term" value="P:methylation"/>
    <property type="evidence" value="ECO:0007669"/>
    <property type="project" value="UniProtKB-KW"/>
</dbReference>
<dbReference type="GO" id="GO:0044027">
    <property type="term" value="P:negative regulation of gene expression via chromosomal CpG island methylation"/>
    <property type="evidence" value="ECO:0007669"/>
    <property type="project" value="TreeGrafter"/>
</dbReference>
<dbReference type="CDD" id="cd00315">
    <property type="entry name" value="Cyt_C5_DNA_methylase"/>
    <property type="match status" value="1"/>
</dbReference>
<dbReference type="Gene3D" id="3.90.120.10">
    <property type="entry name" value="DNA Methylase, subunit A, domain 2"/>
    <property type="match status" value="1"/>
</dbReference>
<dbReference type="Gene3D" id="3.40.50.150">
    <property type="entry name" value="Vaccinia Virus protein VP39"/>
    <property type="match status" value="1"/>
</dbReference>
<dbReference type="InterPro" id="IPR050390">
    <property type="entry name" value="C5-Methyltransferase"/>
</dbReference>
<dbReference type="InterPro" id="IPR018117">
    <property type="entry name" value="C5_DNA_meth_AS"/>
</dbReference>
<dbReference type="InterPro" id="IPR001525">
    <property type="entry name" value="C5_MeTfrase"/>
</dbReference>
<dbReference type="InterPro" id="IPR031303">
    <property type="entry name" value="C5_meth_CS"/>
</dbReference>
<dbReference type="InterPro" id="IPR029063">
    <property type="entry name" value="SAM-dependent_MTases_sf"/>
</dbReference>
<dbReference type="NCBIfam" id="TIGR00675">
    <property type="entry name" value="dcm"/>
    <property type="match status" value="1"/>
</dbReference>
<dbReference type="PANTHER" id="PTHR10629">
    <property type="entry name" value="CYTOSINE-SPECIFIC METHYLTRANSFERASE"/>
    <property type="match status" value="1"/>
</dbReference>
<dbReference type="PANTHER" id="PTHR10629:SF52">
    <property type="entry name" value="DNA (CYTOSINE-5)-METHYLTRANSFERASE 1"/>
    <property type="match status" value="1"/>
</dbReference>
<dbReference type="Pfam" id="PF00145">
    <property type="entry name" value="DNA_methylase"/>
    <property type="match status" value="1"/>
</dbReference>
<dbReference type="PRINTS" id="PR00105">
    <property type="entry name" value="C5METTRFRASE"/>
</dbReference>
<dbReference type="SUPFAM" id="SSF53335">
    <property type="entry name" value="S-adenosyl-L-methionine-dependent methyltransferases"/>
    <property type="match status" value="1"/>
</dbReference>
<dbReference type="PROSITE" id="PS00094">
    <property type="entry name" value="C5_MTASE_1"/>
    <property type="match status" value="1"/>
</dbReference>
<dbReference type="PROSITE" id="PS00095">
    <property type="entry name" value="C5_MTASE_2"/>
    <property type="match status" value="1"/>
</dbReference>
<dbReference type="PROSITE" id="PS51679">
    <property type="entry name" value="SAM_MT_C5"/>
    <property type="match status" value="1"/>
</dbReference>
<comment type="function">
    <text evidence="3 6">A methylase, recognizes the double-stranded sequence 5'-GGCC-3', methylates C-3 on both strands, and protects the DNA from cleavage by the HaeIII endonuclease.</text>
</comment>
<comment type="catalytic activity">
    <reaction evidence="2 3">
        <text>a 2'-deoxycytidine in DNA + S-adenosyl-L-methionine = a 5-methyl-2'-deoxycytidine in DNA + S-adenosyl-L-homocysteine + H(+)</text>
        <dbReference type="Rhea" id="RHEA:13681"/>
        <dbReference type="Rhea" id="RHEA-COMP:11369"/>
        <dbReference type="Rhea" id="RHEA-COMP:11370"/>
        <dbReference type="ChEBI" id="CHEBI:15378"/>
        <dbReference type="ChEBI" id="CHEBI:57856"/>
        <dbReference type="ChEBI" id="CHEBI:59789"/>
        <dbReference type="ChEBI" id="CHEBI:85452"/>
        <dbReference type="ChEBI" id="CHEBI:85454"/>
        <dbReference type="EC" id="2.1.1.37"/>
    </reaction>
</comment>
<comment type="subunit">
    <text evidence="4 5">Monomer.</text>
</comment>
<comment type="similarity">
    <text evidence="1">Belongs to the class I-like SAM-binding methyltransferase superfamily. C5-methyltransferase family.</text>
</comment>
<protein>
    <recommendedName>
        <fullName evidence="6">Type II methyltransferase M.HaeIII</fullName>
        <shortName evidence="7">M.HaeIII</shortName>
        <ecNumber evidence="3">2.1.1.37</ecNumber>
    </recommendedName>
    <alternativeName>
        <fullName>Cytosine-specific methyltransferase HaeIII</fullName>
    </alternativeName>
    <alternativeName>
        <fullName>Modification methylase HaeIII</fullName>
    </alternativeName>
</protein>
<feature type="chain" id="PRO_0000087878" description="Type II methyltransferase M.HaeIII">
    <location>
        <begin position="1"/>
        <end position="330"/>
    </location>
</feature>
<feature type="domain" description="SAM-dependent MTase C5-type" evidence="1">
    <location>
        <begin position="1"/>
        <end position="327"/>
    </location>
</feature>
<feature type="active site" evidence="1 2 3">
    <location>
        <position position="71"/>
    </location>
</feature>
<feature type="binding site" evidence="9">
    <location>
        <position position="29"/>
    </location>
    <ligand>
        <name>ATP</name>
        <dbReference type="ChEBI" id="CHEBI:30616"/>
    </ligand>
</feature>
<feature type="binding site" evidence="9">
    <location>
        <begin position="50"/>
        <end position="51"/>
    </location>
    <ligand>
        <name>ATP</name>
        <dbReference type="ChEBI" id="CHEBI:30616"/>
    </ligand>
</feature>
<feature type="binding site" evidence="9">
    <location>
        <position position="260"/>
    </location>
    <ligand>
        <name>ATP</name>
        <dbReference type="ChEBI" id="CHEBI:30616"/>
    </ligand>
</feature>
<feature type="mutagenesis site" description="No longer has methyltransferase activity, binds DNA in a wild-type manner." evidence="4">
    <original>C</original>
    <variation>S</variation>
    <location>
        <position position="71"/>
    </location>
</feature>
<feature type="strand" evidence="11">
    <location>
        <begin position="2"/>
        <end position="7"/>
    </location>
</feature>
<feature type="helix" evidence="11">
    <location>
        <begin position="12"/>
        <end position="19"/>
    </location>
</feature>
<feature type="strand" evidence="11">
    <location>
        <begin position="23"/>
        <end position="29"/>
    </location>
</feature>
<feature type="turn" evidence="11">
    <location>
        <begin position="32"/>
        <end position="34"/>
    </location>
</feature>
<feature type="helix" evidence="11">
    <location>
        <begin position="35"/>
        <end position="41"/>
    </location>
</feature>
<feature type="strand" evidence="11">
    <location>
        <begin position="44"/>
        <end position="49"/>
    </location>
</feature>
<feature type="helix" evidence="11">
    <location>
        <begin position="51"/>
        <end position="53"/>
    </location>
</feature>
<feature type="helix" evidence="11">
    <location>
        <begin position="56"/>
        <end position="58"/>
    </location>
</feature>
<feature type="strand" evidence="11">
    <location>
        <begin position="63"/>
        <end position="66"/>
    </location>
</feature>
<feature type="helix" evidence="11">
    <location>
        <begin position="71"/>
        <end position="73"/>
    </location>
</feature>
<feature type="strand" evidence="10">
    <location>
        <begin position="75"/>
        <end position="78"/>
    </location>
</feature>
<feature type="strand" evidence="10">
    <location>
        <begin position="83"/>
        <end position="85"/>
    </location>
</feature>
<feature type="helix" evidence="11">
    <location>
        <begin position="86"/>
        <end position="88"/>
    </location>
</feature>
<feature type="helix" evidence="11">
    <location>
        <begin position="89"/>
        <end position="101"/>
    </location>
</feature>
<feature type="strand" evidence="11">
    <location>
        <begin position="104"/>
        <end position="110"/>
    </location>
</feature>
<feature type="helix" evidence="11">
    <location>
        <begin position="113"/>
        <end position="116"/>
    </location>
</feature>
<feature type="helix" evidence="10">
    <location>
        <begin position="117"/>
        <end position="119"/>
    </location>
</feature>
<feature type="helix" evidence="11">
    <location>
        <begin position="121"/>
        <end position="133"/>
    </location>
</feature>
<feature type="strand" evidence="11">
    <location>
        <begin position="135"/>
        <end position="143"/>
    </location>
</feature>
<feature type="helix" evidence="11">
    <location>
        <begin position="144"/>
        <end position="146"/>
    </location>
</feature>
<feature type="strand" evidence="11">
    <location>
        <begin position="154"/>
        <end position="162"/>
    </location>
</feature>
<feature type="helix" evidence="11">
    <location>
        <begin position="163"/>
        <end position="165"/>
    </location>
</feature>
<feature type="helix" evidence="11">
    <location>
        <begin position="181"/>
        <end position="183"/>
    </location>
</feature>
<feature type="helix" evidence="11">
    <location>
        <begin position="186"/>
        <end position="188"/>
    </location>
</feature>
<feature type="strand" evidence="11">
    <location>
        <begin position="189"/>
        <end position="191"/>
    </location>
</feature>
<feature type="helix" evidence="11">
    <location>
        <begin position="197"/>
        <end position="199"/>
    </location>
</feature>
<feature type="helix" evidence="11">
    <location>
        <begin position="203"/>
        <end position="205"/>
    </location>
</feature>
<feature type="strand" evidence="11">
    <location>
        <begin position="206"/>
        <end position="208"/>
    </location>
</feature>
<feature type="helix" evidence="11">
    <location>
        <begin position="222"/>
        <end position="224"/>
    </location>
</feature>
<feature type="helix" evidence="10">
    <location>
        <begin position="242"/>
        <end position="244"/>
    </location>
</feature>
<feature type="strand" evidence="11">
    <location>
        <begin position="255"/>
        <end position="258"/>
    </location>
</feature>
<feature type="strand" evidence="11">
    <location>
        <begin position="261"/>
        <end position="263"/>
    </location>
</feature>
<feature type="turn" evidence="10">
    <location>
        <begin position="266"/>
        <end position="268"/>
    </location>
</feature>
<feature type="helix" evidence="11">
    <location>
        <begin position="269"/>
        <end position="271"/>
    </location>
</feature>
<feature type="helix" evidence="11">
    <location>
        <begin position="277"/>
        <end position="284"/>
    </location>
</feature>
<feature type="helix" evidence="11">
    <location>
        <begin position="297"/>
        <end position="305"/>
    </location>
</feature>
<feature type="helix" evidence="11">
    <location>
        <begin position="310"/>
        <end position="326"/>
    </location>
</feature>